<feature type="signal peptide" evidence="2">
    <location>
        <begin position="1"/>
        <end position="22"/>
    </location>
</feature>
<feature type="chain" id="PRO_0000346782" description="Probable spore coat protein DDB_G0283555">
    <location>
        <begin position="23"/>
        <end position="465"/>
    </location>
</feature>
<feature type="domain" description="DSCP-N">
    <location>
        <begin position="35"/>
        <end position="153"/>
    </location>
</feature>
<feature type="domain" description="Follistatin-like 1">
    <location>
        <begin position="160"/>
        <end position="182"/>
    </location>
</feature>
<feature type="domain" description="Follistatin-like 2">
    <location>
        <begin position="195"/>
        <end position="217"/>
    </location>
</feature>
<feature type="domain" description="Follistatin-like 3">
    <location>
        <begin position="229"/>
        <end position="251"/>
    </location>
</feature>
<feature type="domain" description="Follistatin-like 4">
    <location>
        <begin position="257"/>
        <end position="280"/>
    </location>
</feature>
<feature type="domain" description="Follistatin-like 5">
    <location>
        <begin position="287"/>
        <end position="309"/>
    </location>
</feature>
<feature type="domain" description="Follistatin-like 6">
    <location>
        <begin position="318"/>
        <end position="340"/>
    </location>
</feature>
<feature type="domain" description="Follistatin-like 7">
    <location>
        <begin position="435"/>
        <end position="458"/>
    </location>
</feature>
<dbReference type="EMBL" id="AAFI02000055">
    <property type="protein sequence ID" value="EAL65655.1"/>
    <property type="molecule type" value="Genomic_DNA"/>
</dbReference>
<dbReference type="RefSeq" id="XP_639012.1">
    <property type="nucleotide sequence ID" value="XM_633920.1"/>
</dbReference>
<dbReference type="FunCoup" id="Q54QX2">
    <property type="interactions" value="640"/>
</dbReference>
<dbReference type="STRING" id="44689.Q54QX2"/>
<dbReference type="PaxDb" id="44689-DDB0231653"/>
<dbReference type="EnsemblProtists" id="EAL65655">
    <property type="protein sequence ID" value="EAL65655"/>
    <property type="gene ID" value="DDB_G0283555"/>
</dbReference>
<dbReference type="GeneID" id="8624142"/>
<dbReference type="KEGG" id="ddi:DDB_G0283555"/>
<dbReference type="dictyBase" id="DDB_G0283555"/>
<dbReference type="VEuPathDB" id="AmoebaDB:DDB_G0283555"/>
<dbReference type="eggNOG" id="ENOG502REW3">
    <property type="taxonomic scope" value="Eukaryota"/>
</dbReference>
<dbReference type="HOGENOM" id="CLU_588543_0_0_1"/>
<dbReference type="InParanoid" id="Q54QX2"/>
<dbReference type="OMA" id="AYCVEKP"/>
<dbReference type="PhylomeDB" id="Q54QX2"/>
<dbReference type="PRO" id="PR:Q54QX2"/>
<dbReference type="Proteomes" id="UP000002195">
    <property type="component" value="Chromosome 4"/>
</dbReference>
<dbReference type="GO" id="GO:0031160">
    <property type="term" value="C:spore wall"/>
    <property type="evidence" value="ECO:0007669"/>
    <property type="project" value="UniProtKB-ARBA"/>
</dbReference>
<dbReference type="GO" id="GO:0030435">
    <property type="term" value="P:sporulation resulting in formation of a cellular spore"/>
    <property type="evidence" value="ECO:0007669"/>
    <property type="project" value="UniProtKB-KW"/>
</dbReference>
<dbReference type="InterPro" id="IPR007643">
    <property type="entry name" value="Dict_spore_N"/>
</dbReference>
<dbReference type="InterPro" id="IPR003645">
    <property type="entry name" value="Fol_N"/>
</dbReference>
<dbReference type="Pfam" id="PF04562">
    <property type="entry name" value="Dicty_spore_N"/>
    <property type="match status" value="1"/>
</dbReference>
<dbReference type="SMART" id="SM00274">
    <property type="entry name" value="FOLN"/>
    <property type="match status" value="7"/>
</dbReference>
<keyword id="KW-1185">Reference proteome</keyword>
<keyword id="KW-0677">Repeat</keyword>
<keyword id="KW-0732">Signal</keyword>
<keyword id="KW-0749">Sporulation</keyword>
<name>SP51_DICDI</name>
<protein>
    <recommendedName>
        <fullName>Probable spore coat protein DDB_G0283555</fullName>
    </recommendedName>
</protein>
<organism>
    <name type="scientific">Dictyostelium discoideum</name>
    <name type="common">Social amoeba</name>
    <dbReference type="NCBI Taxonomy" id="44689"/>
    <lineage>
        <taxon>Eukaryota</taxon>
        <taxon>Amoebozoa</taxon>
        <taxon>Evosea</taxon>
        <taxon>Eumycetozoa</taxon>
        <taxon>Dictyostelia</taxon>
        <taxon>Dictyosteliales</taxon>
        <taxon>Dictyosteliaceae</taxon>
        <taxon>Dictyostelium</taxon>
    </lineage>
</organism>
<sequence>MRINNLLVCLVLVFSTLSISNANPEHDKWWKPPPRNCDSLSEDQCKAPNSGCKYLPFVSCCGTKKFFCVEDNGNGCGNAPLSCMKDSKTDAIYEIWSSCRPNSPFLYDYQVRNETCDQKLCEASGGVCEWVDPVPCMGTSCCPRYPVCKGGGGGGGPVSPCKNVICPEDYCCQDIHGGAYCVEKPRPPPPKPHHLCKAIKCGRGKECIVKDGKACCVPKPKPPPPPPVLCDAVQCPKGFNCVEFGGTANCVECEEKECEHHHCPPGYDCVVDSHHRPHCQRPNPGSLCRNVTCPYGYVCKAINNLPTCIRNPLPPNYPCRDLHCPSGYSCEIINDLPSCVRETHPGHCKTCHDVNCGSLDCAMVPNKCPRGSRDCCIQIPSCRLPSNSNDDYDNDPNGYDDNENEGDGLSIPCGPIITCKLNEICLLEQSRCAPLCEFVKCSPGTKCVADTTGIPVCLPNGITPY</sequence>
<reference key="1">
    <citation type="journal article" date="2005" name="Nature">
        <title>The genome of the social amoeba Dictyostelium discoideum.</title>
        <authorList>
            <person name="Eichinger L."/>
            <person name="Pachebat J.A."/>
            <person name="Gloeckner G."/>
            <person name="Rajandream M.A."/>
            <person name="Sucgang R."/>
            <person name="Berriman M."/>
            <person name="Song J."/>
            <person name="Olsen R."/>
            <person name="Szafranski K."/>
            <person name="Xu Q."/>
            <person name="Tunggal B."/>
            <person name="Kummerfeld S."/>
            <person name="Madera M."/>
            <person name="Konfortov B.A."/>
            <person name="Rivero F."/>
            <person name="Bankier A.T."/>
            <person name="Lehmann R."/>
            <person name="Hamlin N."/>
            <person name="Davies R."/>
            <person name="Gaudet P."/>
            <person name="Fey P."/>
            <person name="Pilcher K."/>
            <person name="Chen G."/>
            <person name="Saunders D."/>
            <person name="Sodergren E.J."/>
            <person name="Davis P."/>
            <person name="Kerhornou A."/>
            <person name="Nie X."/>
            <person name="Hall N."/>
            <person name="Anjard C."/>
            <person name="Hemphill L."/>
            <person name="Bason N."/>
            <person name="Farbrother P."/>
            <person name="Desany B."/>
            <person name="Just E."/>
            <person name="Morio T."/>
            <person name="Rost R."/>
            <person name="Churcher C.M."/>
            <person name="Cooper J."/>
            <person name="Haydock S."/>
            <person name="van Driessche N."/>
            <person name="Cronin A."/>
            <person name="Goodhead I."/>
            <person name="Muzny D.M."/>
            <person name="Mourier T."/>
            <person name="Pain A."/>
            <person name="Lu M."/>
            <person name="Harper D."/>
            <person name="Lindsay R."/>
            <person name="Hauser H."/>
            <person name="James K.D."/>
            <person name="Quiles M."/>
            <person name="Madan Babu M."/>
            <person name="Saito T."/>
            <person name="Buchrieser C."/>
            <person name="Wardroper A."/>
            <person name="Felder M."/>
            <person name="Thangavelu M."/>
            <person name="Johnson D."/>
            <person name="Knights A."/>
            <person name="Loulseged H."/>
            <person name="Mungall K.L."/>
            <person name="Oliver K."/>
            <person name="Price C."/>
            <person name="Quail M.A."/>
            <person name="Urushihara H."/>
            <person name="Hernandez J."/>
            <person name="Rabbinowitsch E."/>
            <person name="Steffen D."/>
            <person name="Sanders M."/>
            <person name="Ma J."/>
            <person name="Kohara Y."/>
            <person name="Sharp S."/>
            <person name="Simmonds M.N."/>
            <person name="Spiegler S."/>
            <person name="Tivey A."/>
            <person name="Sugano S."/>
            <person name="White B."/>
            <person name="Walker D."/>
            <person name="Woodward J.R."/>
            <person name="Winckler T."/>
            <person name="Tanaka Y."/>
            <person name="Shaulsky G."/>
            <person name="Schleicher M."/>
            <person name="Weinstock G.M."/>
            <person name="Rosenthal A."/>
            <person name="Cox E.C."/>
            <person name="Chisholm R.L."/>
            <person name="Gibbs R.A."/>
            <person name="Loomis W.F."/>
            <person name="Platzer M."/>
            <person name="Kay R.R."/>
            <person name="Williams J.G."/>
            <person name="Dear P.H."/>
            <person name="Noegel A.A."/>
            <person name="Barrell B.G."/>
            <person name="Kuspa A."/>
        </authorList>
    </citation>
    <scope>NUCLEOTIDE SEQUENCE [LARGE SCALE GENOMIC DNA]</scope>
    <source>
        <strain>AX4</strain>
    </source>
</reference>
<accession>Q54QX2</accession>
<gene>
    <name type="ORF">DDB_G0283555</name>
</gene>
<comment type="function">
    <text evidence="1">May contribute to the structure of the coat at the interface between the middle, cellulosic layer and the outer, electron-dense, proteinaceous layer.</text>
</comment>
<proteinExistence type="inferred from homology"/>
<evidence type="ECO:0000250" key="1"/>
<evidence type="ECO:0000255" key="2"/>